<name>RL35_MYCGE</name>
<dbReference type="EMBL" id="L43967">
    <property type="protein sequence ID" value="AAC71415.1"/>
    <property type="molecule type" value="Genomic_DNA"/>
</dbReference>
<dbReference type="PIR" id="G64221">
    <property type="entry name" value="G64221"/>
</dbReference>
<dbReference type="RefSeq" id="WP_009885738.1">
    <property type="nucleotide sequence ID" value="NC_000908.2"/>
</dbReference>
<dbReference type="SMR" id="P47439"/>
<dbReference type="FunCoup" id="P47439">
    <property type="interactions" value="134"/>
</dbReference>
<dbReference type="STRING" id="243273.MG_197"/>
<dbReference type="GeneID" id="88282329"/>
<dbReference type="KEGG" id="mge:MG_197"/>
<dbReference type="eggNOG" id="COG0291">
    <property type="taxonomic scope" value="Bacteria"/>
</dbReference>
<dbReference type="HOGENOM" id="CLU_169643_3_0_14"/>
<dbReference type="InParanoid" id="P47439"/>
<dbReference type="OrthoDB" id="47476at2"/>
<dbReference type="BioCyc" id="MGEN243273:G1GJ2-229-MONOMER"/>
<dbReference type="Proteomes" id="UP000000807">
    <property type="component" value="Chromosome"/>
</dbReference>
<dbReference type="GO" id="GO:1990904">
    <property type="term" value="C:ribonucleoprotein complex"/>
    <property type="evidence" value="ECO:0007669"/>
    <property type="project" value="UniProtKB-KW"/>
</dbReference>
<dbReference type="GO" id="GO:0005840">
    <property type="term" value="C:ribosome"/>
    <property type="evidence" value="ECO:0007669"/>
    <property type="project" value="UniProtKB-KW"/>
</dbReference>
<dbReference type="GO" id="GO:0003735">
    <property type="term" value="F:structural constituent of ribosome"/>
    <property type="evidence" value="ECO:0007669"/>
    <property type="project" value="InterPro"/>
</dbReference>
<dbReference type="GO" id="GO:0006412">
    <property type="term" value="P:translation"/>
    <property type="evidence" value="ECO:0007669"/>
    <property type="project" value="UniProtKB-UniRule"/>
</dbReference>
<dbReference type="FunFam" id="4.10.410.60:FF:000001">
    <property type="entry name" value="50S ribosomal protein L35"/>
    <property type="match status" value="1"/>
</dbReference>
<dbReference type="Gene3D" id="4.10.410.60">
    <property type="match status" value="1"/>
</dbReference>
<dbReference type="HAMAP" id="MF_00514">
    <property type="entry name" value="Ribosomal_bL35"/>
    <property type="match status" value="1"/>
</dbReference>
<dbReference type="InterPro" id="IPR001706">
    <property type="entry name" value="Ribosomal_bL35"/>
</dbReference>
<dbReference type="InterPro" id="IPR021137">
    <property type="entry name" value="Ribosomal_bL35-like"/>
</dbReference>
<dbReference type="InterPro" id="IPR018265">
    <property type="entry name" value="Ribosomal_bL35_CS"/>
</dbReference>
<dbReference type="InterPro" id="IPR037229">
    <property type="entry name" value="Ribosomal_bL35_sf"/>
</dbReference>
<dbReference type="NCBIfam" id="TIGR00001">
    <property type="entry name" value="rpmI_bact"/>
    <property type="match status" value="1"/>
</dbReference>
<dbReference type="PANTHER" id="PTHR33343">
    <property type="entry name" value="54S RIBOSOMAL PROTEIN BL35M"/>
    <property type="match status" value="1"/>
</dbReference>
<dbReference type="PANTHER" id="PTHR33343:SF1">
    <property type="entry name" value="LARGE RIBOSOMAL SUBUNIT PROTEIN BL35M"/>
    <property type="match status" value="1"/>
</dbReference>
<dbReference type="Pfam" id="PF01632">
    <property type="entry name" value="Ribosomal_L35p"/>
    <property type="match status" value="1"/>
</dbReference>
<dbReference type="PRINTS" id="PR00064">
    <property type="entry name" value="RIBOSOMALL35"/>
</dbReference>
<dbReference type="SUPFAM" id="SSF143034">
    <property type="entry name" value="L35p-like"/>
    <property type="match status" value="1"/>
</dbReference>
<dbReference type="PROSITE" id="PS00936">
    <property type="entry name" value="RIBOSOMAL_L35"/>
    <property type="match status" value="1"/>
</dbReference>
<comment type="similarity">
    <text evidence="1">Belongs to the bacterial ribosomal protein bL35 family.</text>
</comment>
<sequence>MKTKSAAVKRFKLTKSGQIKRKHAYTSHLAPHKSTKQKRHLRKQATVSNSELKRIGILI</sequence>
<gene>
    <name evidence="1" type="primary">rpmI</name>
    <name evidence="1" type="synonym">rpl35</name>
    <name type="ordered locus">MG197</name>
</gene>
<keyword id="KW-1185">Reference proteome</keyword>
<keyword id="KW-0687">Ribonucleoprotein</keyword>
<keyword id="KW-0689">Ribosomal protein</keyword>
<protein>
    <recommendedName>
        <fullName evidence="1">Large ribosomal subunit protein bL35</fullName>
    </recommendedName>
    <alternativeName>
        <fullName evidence="3">50S ribosomal protein L35</fullName>
    </alternativeName>
</protein>
<feature type="chain" id="PRO_0000177381" description="Large ribosomal subunit protein bL35">
    <location>
        <begin position="1"/>
        <end position="59"/>
    </location>
</feature>
<feature type="region of interest" description="Disordered" evidence="2">
    <location>
        <begin position="17"/>
        <end position="47"/>
    </location>
</feature>
<feature type="compositionally biased region" description="Basic residues" evidence="2">
    <location>
        <begin position="17"/>
        <end position="43"/>
    </location>
</feature>
<accession>P47439</accession>
<organism>
    <name type="scientific">Mycoplasma genitalium (strain ATCC 33530 / DSM 19775 / NCTC 10195 / G37)</name>
    <name type="common">Mycoplasmoides genitalium</name>
    <dbReference type="NCBI Taxonomy" id="243273"/>
    <lineage>
        <taxon>Bacteria</taxon>
        <taxon>Bacillati</taxon>
        <taxon>Mycoplasmatota</taxon>
        <taxon>Mycoplasmoidales</taxon>
        <taxon>Mycoplasmoidaceae</taxon>
        <taxon>Mycoplasmoides</taxon>
    </lineage>
</organism>
<proteinExistence type="inferred from homology"/>
<evidence type="ECO:0000255" key="1">
    <source>
        <dbReference type="HAMAP-Rule" id="MF_00514"/>
    </source>
</evidence>
<evidence type="ECO:0000256" key="2">
    <source>
        <dbReference type="SAM" id="MobiDB-lite"/>
    </source>
</evidence>
<evidence type="ECO:0000305" key="3"/>
<reference key="1">
    <citation type="journal article" date="1995" name="Science">
        <title>The minimal gene complement of Mycoplasma genitalium.</title>
        <authorList>
            <person name="Fraser C.M."/>
            <person name="Gocayne J.D."/>
            <person name="White O."/>
            <person name="Adams M.D."/>
            <person name="Clayton R.A."/>
            <person name="Fleischmann R.D."/>
            <person name="Bult C.J."/>
            <person name="Kerlavage A.R."/>
            <person name="Sutton G.G."/>
            <person name="Kelley J.M."/>
            <person name="Fritchman J.L."/>
            <person name="Weidman J.F."/>
            <person name="Small K.V."/>
            <person name="Sandusky M."/>
            <person name="Fuhrmann J.L."/>
            <person name="Nguyen D.T."/>
            <person name="Utterback T.R."/>
            <person name="Saudek D.M."/>
            <person name="Phillips C.A."/>
            <person name="Merrick J.M."/>
            <person name="Tomb J.-F."/>
            <person name="Dougherty B.A."/>
            <person name="Bott K.F."/>
            <person name="Hu P.-C."/>
            <person name="Lucier T.S."/>
            <person name="Peterson S.N."/>
            <person name="Smith H.O."/>
            <person name="Hutchison C.A. III"/>
            <person name="Venter J.C."/>
        </authorList>
    </citation>
    <scope>NUCLEOTIDE SEQUENCE [LARGE SCALE GENOMIC DNA]</scope>
    <source>
        <strain>ATCC 33530 / DSM 19775 / NCTC 10195 / G37</strain>
    </source>
</reference>